<comment type="function">
    <text evidence="1">NDH-1 shuttles electrons from NADH, via FMN and iron-sulfur (Fe-S) centers, to quinones in the respiratory chain. The immediate electron acceptor for the enzyme in this species is believed to be ubiquinone. Couples the redox reaction to proton translocation (for every two electrons transferred, four hydrogen ions are translocated across the cytoplasmic membrane), and thus conserves the redox energy in a proton gradient. This subunit may bind ubiquinone.</text>
</comment>
<comment type="catalytic activity">
    <reaction evidence="1">
        <text>a quinone + NADH + 5 H(+)(in) = a quinol + NAD(+) + 4 H(+)(out)</text>
        <dbReference type="Rhea" id="RHEA:57888"/>
        <dbReference type="ChEBI" id="CHEBI:15378"/>
        <dbReference type="ChEBI" id="CHEBI:24646"/>
        <dbReference type="ChEBI" id="CHEBI:57540"/>
        <dbReference type="ChEBI" id="CHEBI:57945"/>
        <dbReference type="ChEBI" id="CHEBI:132124"/>
    </reaction>
</comment>
<comment type="subunit">
    <text evidence="1">NDH-1 is composed of 14 different subunits. Subunits NuoA, H, J, K, L, M, N constitute the membrane sector of the complex.</text>
</comment>
<comment type="subcellular location">
    <subcellularLocation>
        <location evidence="1">Cell inner membrane</location>
        <topology evidence="1">Multi-pass membrane protein</topology>
    </subcellularLocation>
</comment>
<comment type="similarity">
    <text evidence="1">Belongs to the complex I subunit 1 family.</text>
</comment>
<sequence length="332" mass="36725">MSELTGGIIECILKIIVVLLIFSALAGFGTYLERKVLGFFQRRIGPNYVGPYGLLQVVADGIKLFAKEDIIPQNAIKPIFILAPSIAAITAFIAMAPIPFFPEFEIFGYVVRPIIADINVGILFVLAVSSCGIYAPLLAGLSSGNKWSLIGGARAAIQFLSFEVITILSLLAPLMIIESLSLIDINNYQQGSMLDWLIFKQPLAFGLFIIAAYVELNRTPFDLLEHEAELTAGFATEYSGLKWGMFFIGEYANMFATAFILSLVFCGGFNDWGFIPGGIAILLKVCFFIFLFMWVRATFPHVRPDQLMRMCWKIMLPLALLNVLITGCILLF</sequence>
<accession>Q7VFS9</accession>
<feature type="chain" id="PRO_0000240078" description="NADH-quinone oxidoreductase subunit H">
    <location>
        <begin position="1"/>
        <end position="332"/>
    </location>
</feature>
<feature type="transmembrane region" description="Helical" evidence="1">
    <location>
        <begin position="8"/>
        <end position="28"/>
    </location>
</feature>
<feature type="transmembrane region" description="Helical" evidence="1">
    <location>
        <begin position="44"/>
        <end position="66"/>
    </location>
</feature>
<feature type="transmembrane region" description="Helical" evidence="1">
    <location>
        <begin position="78"/>
        <end position="98"/>
    </location>
</feature>
<feature type="transmembrane region" description="Helical" evidence="1">
    <location>
        <begin position="120"/>
        <end position="140"/>
    </location>
</feature>
<feature type="transmembrane region" description="Helical" evidence="1">
    <location>
        <begin position="157"/>
        <end position="177"/>
    </location>
</feature>
<feature type="transmembrane region" description="Helical" evidence="1">
    <location>
        <begin position="196"/>
        <end position="216"/>
    </location>
</feature>
<feature type="transmembrane region" description="Helical" evidence="1">
    <location>
        <begin position="245"/>
        <end position="265"/>
    </location>
</feature>
<feature type="transmembrane region" description="Helical" evidence="1">
    <location>
        <begin position="274"/>
        <end position="294"/>
    </location>
</feature>
<feature type="transmembrane region" description="Helical" evidence="1">
    <location>
        <begin position="312"/>
        <end position="332"/>
    </location>
</feature>
<reference key="1">
    <citation type="journal article" date="2003" name="Proc. Natl. Acad. Sci. U.S.A.">
        <title>The complete genome sequence of the carcinogenic bacterium Helicobacter hepaticus.</title>
        <authorList>
            <person name="Suerbaum S."/>
            <person name="Josenhans C."/>
            <person name="Sterzenbach T."/>
            <person name="Drescher B."/>
            <person name="Brandt P."/>
            <person name="Bell M."/>
            <person name="Droege M."/>
            <person name="Fartmann B."/>
            <person name="Fischer H.-P."/>
            <person name="Ge Z."/>
            <person name="Hoerster A."/>
            <person name="Holland R."/>
            <person name="Klein K."/>
            <person name="Koenig J."/>
            <person name="Macko L."/>
            <person name="Mendz G.L."/>
            <person name="Nyakatura G."/>
            <person name="Schauer D.B."/>
            <person name="Shen Z."/>
            <person name="Weber J."/>
            <person name="Frosch M."/>
            <person name="Fox J.G."/>
        </authorList>
    </citation>
    <scope>NUCLEOTIDE SEQUENCE [LARGE SCALE GENOMIC DNA]</scope>
    <source>
        <strain>ATCC 51449 / 3B1</strain>
    </source>
</reference>
<name>NUOH_HELHP</name>
<gene>
    <name evidence="1" type="primary">nuoH</name>
    <name type="ordered locus">HH_1596</name>
</gene>
<evidence type="ECO:0000255" key="1">
    <source>
        <dbReference type="HAMAP-Rule" id="MF_01350"/>
    </source>
</evidence>
<keyword id="KW-0997">Cell inner membrane</keyword>
<keyword id="KW-1003">Cell membrane</keyword>
<keyword id="KW-0472">Membrane</keyword>
<keyword id="KW-0520">NAD</keyword>
<keyword id="KW-0874">Quinone</keyword>
<keyword id="KW-1185">Reference proteome</keyword>
<keyword id="KW-1278">Translocase</keyword>
<keyword id="KW-0812">Transmembrane</keyword>
<keyword id="KW-1133">Transmembrane helix</keyword>
<keyword id="KW-0830">Ubiquinone</keyword>
<protein>
    <recommendedName>
        <fullName evidence="1">NADH-quinone oxidoreductase subunit H</fullName>
        <ecNumber evidence="1">7.1.1.-</ecNumber>
    </recommendedName>
    <alternativeName>
        <fullName evidence="1">NADH dehydrogenase I subunit H</fullName>
    </alternativeName>
    <alternativeName>
        <fullName evidence="1">NDH-1 subunit H</fullName>
    </alternativeName>
</protein>
<proteinExistence type="inferred from homology"/>
<organism>
    <name type="scientific">Helicobacter hepaticus (strain ATCC 51449 / 3B1)</name>
    <dbReference type="NCBI Taxonomy" id="235279"/>
    <lineage>
        <taxon>Bacteria</taxon>
        <taxon>Pseudomonadati</taxon>
        <taxon>Campylobacterota</taxon>
        <taxon>Epsilonproteobacteria</taxon>
        <taxon>Campylobacterales</taxon>
        <taxon>Helicobacteraceae</taxon>
        <taxon>Helicobacter</taxon>
    </lineage>
</organism>
<dbReference type="EC" id="7.1.1.-" evidence="1"/>
<dbReference type="EMBL" id="AE017125">
    <property type="protein sequence ID" value="AAP78193.1"/>
    <property type="molecule type" value="Genomic_DNA"/>
</dbReference>
<dbReference type="RefSeq" id="WP_011116436.1">
    <property type="nucleotide sequence ID" value="NC_004917.1"/>
</dbReference>
<dbReference type="SMR" id="Q7VFS9"/>
<dbReference type="STRING" id="235279.HH_1596"/>
<dbReference type="KEGG" id="hhe:HH_1596"/>
<dbReference type="eggNOG" id="COG1005">
    <property type="taxonomic scope" value="Bacteria"/>
</dbReference>
<dbReference type="HOGENOM" id="CLU_015134_0_1_7"/>
<dbReference type="OrthoDB" id="9803734at2"/>
<dbReference type="Proteomes" id="UP000002495">
    <property type="component" value="Chromosome"/>
</dbReference>
<dbReference type="GO" id="GO:0005886">
    <property type="term" value="C:plasma membrane"/>
    <property type="evidence" value="ECO:0007669"/>
    <property type="project" value="UniProtKB-SubCell"/>
</dbReference>
<dbReference type="GO" id="GO:0003954">
    <property type="term" value="F:NADH dehydrogenase activity"/>
    <property type="evidence" value="ECO:0007669"/>
    <property type="project" value="TreeGrafter"/>
</dbReference>
<dbReference type="GO" id="GO:0016655">
    <property type="term" value="F:oxidoreductase activity, acting on NAD(P)H, quinone or similar compound as acceptor"/>
    <property type="evidence" value="ECO:0007669"/>
    <property type="project" value="UniProtKB-UniRule"/>
</dbReference>
<dbReference type="GO" id="GO:0048038">
    <property type="term" value="F:quinone binding"/>
    <property type="evidence" value="ECO:0007669"/>
    <property type="project" value="UniProtKB-KW"/>
</dbReference>
<dbReference type="GO" id="GO:0009060">
    <property type="term" value="P:aerobic respiration"/>
    <property type="evidence" value="ECO:0007669"/>
    <property type="project" value="TreeGrafter"/>
</dbReference>
<dbReference type="HAMAP" id="MF_01350">
    <property type="entry name" value="NDH1_NuoH"/>
    <property type="match status" value="1"/>
</dbReference>
<dbReference type="InterPro" id="IPR001694">
    <property type="entry name" value="NADH_UbQ_OxRdtase_su1/FPO"/>
</dbReference>
<dbReference type="InterPro" id="IPR018086">
    <property type="entry name" value="NADH_UbQ_OxRdtase_su1_CS"/>
</dbReference>
<dbReference type="NCBIfam" id="NF004741">
    <property type="entry name" value="PRK06076.1-2"/>
    <property type="match status" value="1"/>
</dbReference>
<dbReference type="PANTHER" id="PTHR11432">
    <property type="entry name" value="NADH DEHYDROGENASE SUBUNIT 1"/>
    <property type="match status" value="1"/>
</dbReference>
<dbReference type="PANTHER" id="PTHR11432:SF3">
    <property type="entry name" value="NADH-UBIQUINONE OXIDOREDUCTASE CHAIN 1"/>
    <property type="match status" value="1"/>
</dbReference>
<dbReference type="Pfam" id="PF00146">
    <property type="entry name" value="NADHdh"/>
    <property type="match status" value="1"/>
</dbReference>
<dbReference type="PROSITE" id="PS00667">
    <property type="entry name" value="COMPLEX1_ND1_1"/>
    <property type="match status" value="1"/>
</dbReference>